<dbReference type="EMBL" id="AF123841">
    <property type="protein sequence ID" value="AAG26243.1"/>
    <property type="molecule type" value="Genomic_DNA"/>
</dbReference>
<dbReference type="RefSeq" id="YP_011086829.1">
    <property type="nucleotide sequence ID" value="NC_087887.1"/>
</dbReference>
<dbReference type="SMR" id="Q7J1A3"/>
<dbReference type="GeneID" id="89433374"/>
<dbReference type="GO" id="GO:0009535">
    <property type="term" value="C:chloroplast thylakoid membrane"/>
    <property type="evidence" value="ECO:0007669"/>
    <property type="project" value="UniProtKB-SubCell"/>
</dbReference>
<dbReference type="GO" id="GO:0009539">
    <property type="term" value="C:photosystem II reaction center"/>
    <property type="evidence" value="ECO:0007669"/>
    <property type="project" value="InterPro"/>
</dbReference>
<dbReference type="GO" id="GO:0009055">
    <property type="term" value="F:electron transfer activity"/>
    <property type="evidence" value="ECO:0007669"/>
    <property type="project" value="UniProtKB-UniRule"/>
</dbReference>
<dbReference type="GO" id="GO:0020037">
    <property type="term" value="F:heme binding"/>
    <property type="evidence" value="ECO:0007669"/>
    <property type="project" value="InterPro"/>
</dbReference>
<dbReference type="GO" id="GO:0005506">
    <property type="term" value="F:iron ion binding"/>
    <property type="evidence" value="ECO:0007669"/>
    <property type="project" value="UniProtKB-UniRule"/>
</dbReference>
<dbReference type="GO" id="GO:0009767">
    <property type="term" value="P:photosynthetic electron transport chain"/>
    <property type="evidence" value="ECO:0007669"/>
    <property type="project" value="InterPro"/>
</dbReference>
<dbReference type="HAMAP" id="MF_00643">
    <property type="entry name" value="PSII_PsbF"/>
    <property type="match status" value="1"/>
</dbReference>
<dbReference type="InterPro" id="IPR006241">
    <property type="entry name" value="PSII_cyt_b559_bsu"/>
</dbReference>
<dbReference type="InterPro" id="IPR006216">
    <property type="entry name" value="PSII_cyt_b559_CS"/>
</dbReference>
<dbReference type="InterPro" id="IPR013081">
    <property type="entry name" value="PSII_cyt_b559_N"/>
</dbReference>
<dbReference type="NCBIfam" id="TIGR01333">
    <property type="entry name" value="cyt_b559_beta"/>
    <property type="match status" value="1"/>
</dbReference>
<dbReference type="Pfam" id="PF00283">
    <property type="entry name" value="Cytochrom_B559"/>
    <property type="match status" value="1"/>
</dbReference>
<dbReference type="PIRSF" id="PIRSF000037">
    <property type="entry name" value="PsbF"/>
    <property type="match status" value="1"/>
</dbReference>
<dbReference type="SUPFAM" id="SSF161045">
    <property type="entry name" value="Cytochrome b559 subunits"/>
    <property type="match status" value="1"/>
</dbReference>
<dbReference type="PROSITE" id="PS00537">
    <property type="entry name" value="CYTOCHROME_B559"/>
    <property type="match status" value="1"/>
</dbReference>
<sequence length="39" mass="4424">MTIDRTYPIFTVRWLAVHGLAVPTVSFLGSISAMQFIQR</sequence>
<reference key="1">
    <citation type="journal article" date="2000" name="Am. J. Bot.">
        <title>Utility of 17 chloroplast genes for inferring the phylogeny of the basal angiosperms.</title>
        <authorList>
            <person name="Graham S.W."/>
            <person name="Olmstead R.G."/>
        </authorList>
    </citation>
    <scope>NUCLEOTIDE SEQUENCE [GENOMIC DNA]</scope>
</reference>
<protein>
    <recommendedName>
        <fullName evidence="1">Cytochrome b559 subunit beta</fullName>
    </recommendedName>
    <alternativeName>
        <fullName evidence="1">PSII reaction center subunit VI</fullName>
    </alternativeName>
</protein>
<evidence type="ECO:0000255" key="1">
    <source>
        <dbReference type="HAMAP-Rule" id="MF_00643"/>
    </source>
</evidence>
<organism>
    <name type="scientific">Saururus cernuus</name>
    <name type="common">Lizard's tail</name>
    <dbReference type="NCBI Taxonomy" id="13260"/>
    <lineage>
        <taxon>Eukaryota</taxon>
        <taxon>Viridiplantae</taxon>
        <taxon>Streptophyta</taxon>
        <taxon>Embryophyta</taxon>
        <taxon>Tracheophyta</taxon>
        <taxon>Spermatophyta</taxon>
        <taxon>Magnoliopsida</taxon>
        <taxon>Magnoliidae</taxon>
        <taxon>Piperales</taxon>
        <taxon>Saururaceae</taxon>
        <taxon>Saururus</taxon>
    </lineage>
</organism>
<gene>
    <name evidence="1" type="primary">psbF</name>
</gene>
<name>PSBF_SAUCE</name>
<feature type="chain" id="PRO_0000200449" description="Cytochrome b559 subunit beta">
    <location>
        <begin position="1"/>
        <end position="39"/>
    </location>
</feature>
<feature type="transmembrane region" description="Helical" evidence="1">
    <location>
        <begin position="14"/>
        <end position="30"/>
    </location>
</feature>
<feature type="binding site" description="axial binding residue" evidence="1">
    <location>
        <position position="18"/>
    </location>
    <ligand>
        <name>heme</name>
        <dbReference type="ChEBI" id="CHEBI:30413"/>
        <note>ligand shared with alpha subunit</note>
    </ligand>
    <ligandPart>
        <name>Fe</name>
        <dbReference type="ChEBI" id="CHEBI:18248"/>
    </ligandPart>
</feature>
<comment type="function">
    <text evidence="1">This b-type cytochrome is tightly associated with the reaction center of photosystem II (PSII). PSII is a light-driven water:plastoquinone oxidoreductase that uses light energy to abstract electrons from H(2)O, generating O(2) and a proton gradient subsequently used for ATP formation. It consists of a core antenna complex that captures photons, and an electron transfer chain that converts photonic excitation into a charge separation.</text>
</comment>
<comment type="cofactor">
    <cofactor evidence="1">
        <name>heme b</name>
        <dbReference type="ChEBI" id="CHEBI:60344"/>
    </cofactor>
    <text evidence="1">With its partner (PsbE) binds heme. PSII binds additional chlorophylls, carotenoids and specific lipids.</text>
</comment>
<comment type="subunit">
    <text evidence="1">Heterodimer of an alpha subunit and a beta subunit. PSII is composed of 1 copy each of membrane proteins PsbA, PsbB, PsbC, PsbD, PsbE, PsbF, PsbH, PsbI, PsbJ, PsbK, PsbL, PsbM, PsbT, PsbX, PsbY, PsbZ, Psb30/Ycf12, at least 3 peripheral proteins of the oxygen-evolving complex and a large number of cofactors. It forms dimeric complexes.</text>
</comment>
<comment type="subcellular location">
    <subcellularLocation>
        <location evidence="1">Plastid</location>
        <location evidence="1">Chloroplast thylakoid membrane</location>
        <topology evidence="1">Single-pass membrane protein</topology>
    </subcellularLocation>
</comment>
<comment type="similarity">
    <text evidence="1">Belongs to the PsbE/PsbF family.</text>
</comment>
<keyword id="KW-0150">Chloroplast</keyword>
<keyword id="KW-0249">Electron transport</keyword>
<keyword id="KW-0349">Heme</keyword>
<keyword id="KW-0408">Iron</keyword>
<keyword id="KW-0472">Membrane</keyword>
<keyword id="KW-0479">Metal-binding</keyword>
<keyword id="KW-0602">Photosynthesis</keyword>
<keyword id="KW-0604">Photosystem II</keyword>
<keyword id="KW-0934">Plastid</keyword>
<keyword id="KW-0793">Thylakoid</keyword>
<keyword id="KW-0812">Transmembrane</keyword>
<keyword id="KW-1133">Transmembrane helix</keyword>
<keyword id="KW-0813">Transport</keyword>
<proteinExistence type="inferred from homology"/>
<geneLocation type="chloroplast"/>
<accession>Q7J1A3</accession>